<dbReference type="EMBL" id="Z99707">
    <property type="protein sequence ID" value="CAB16782.1"/>
    <property type="status" value="ALT_SEQ"/>
    <property type="molecule type" value="Genomic_DNA"/>
</dbReference>
<dbReference type="EMBL" id="AL161590">
    <property type="protein sequence ID" value="CAB80379.1"/>
    <property type="status" value="ALT_SEQ"/>
    <property type="molecule type" value="Genomic_DNA"/>
</dbReference>
<dbReference type="EMBL" id="CP002687">
    <property type="protein sequence ID" value="AEE86757.1"/>
    <property type="molecule type" value="Genomic_DNA"/>
</dbReference>
<dbReference type="EMBL" id="AY093072">
    <property type="protein sequence ID" value="AAM13071.1"/>
    <property type="molecule type" value="mRNA"/>
</dbReference>
<dbReference type="EMBL" id="BT008879">
    <property type="protein sequence ID" value="AAP68318.1"/>
    <property type="molecule type" value="mRNA"/>
</dbReference>
<dbReference type="PIR" id="F85438">
    <property type="entry name" value="F85438"/>
</dbReference>
<dbReference type="RefSeq" id="NP_195430.2">
    <property type="nucleotide sequence ID" value="NM_119876.4"/>
</dbReference>
<dbReference type="SMR" id="Q8RWH9"/>
<dbReference type="BioGRID" id="15148">
    <property type="interactions" value="36"/>
</dbReference>
<dbReference type="FunCoup" id="Q8RWH9">
    <property type="interactions" value="1473"/>
</dbReference>
<dbReference type="STRING" id="3702.Q8RWH9"/>
<dbReference type="GlyGen" id="Q8RWH9">
    <property type="glycosylation" value="3 sites"/>
</dbReference>
<dbReference type="PaxDb" id="3702-AT4G37130.1"/>
<dbReference type="ProteomicsDB" id="248854"/>
<dbReference type="EnsemblPlants" id="AT4G37130.1">
    <property type="protein sequence ID" value="AT4G37130.1"/>
    <property type="gene ID" value="AT4G37130"/>
</dbReference>
<dbReference type="GeneID" id="829867"/>
<dbReference type="Gramene" id="AT4G37130.1">
    <property type="protein sequence ID" value="AT4G37130.1"/>
    <property type="gene ID" value="AT4G37130"/>
</dbReference>
<dbReference type="KEGG" id="ath:AT4G37130"/>
<dbReference type="Araport" id="AT4G37130"/>
<dbReference type="TAIR" id="AT4G37130">
    <property type="gene designation" value="TCU1"/>
</dbReference>
<dbReference type="eggNOG" id="ENOG502QR16">
    <property type="taxonomic scope" value="Eukaryota"/>
</dbReference>
<dbReference type="HOGENOM" id="CLU_026411_0_0_1"/>
<dbReference type="InParanoid" id="Q8RWH9"/>
<dbReference type="OMA" id="NYSTKWA"/>
<dbReference type="PhylomeDB" id="Q8RWH9"/>
<dbReference type="PRO" id="PR:Q8RWH9"/>
<dbReference type="Proteomes" id="UP000006548">
    <property type="component" value="Chromosome 4"/>
</dbReference>
<dbReference type="ExpressionAtlas" id="Q8RWH9">
    <property type="expression patterns" value="baseline and differential"/>
</dbReference>
<dbReference type="GO" id="GO:0005635">
    <property type="term" value="C:nuclear envelope"/>
    <property type="evidence" value="ECO:0000314"/>
    <property type="project" value="TAIR"/>
</dbReference>
<dbReference type="GO" id="GO:0005643">
    <property type="term" value="C:nuclear pore"/>
    <property type="evidence" value="ECO:0007669"/>
    <property type="project" value="UniProtKB-SubCell"/>
</dbReference>
<dbReference type="GO" id="GO:0008139">
    <property type="term" value="F:nuclear localization sequence binding"/>
    <property type="evidence" value="ECO:0007669"/>
    <property type="project" value="InterPro"/>
</dbReference>
<dbReference type="GO" id="GO:0017056">
    <property type="term" value="F:structural constituent of nuclear pore"/>
    <property type="evidence" value="ECO:0007669"/>
    <property type="project" value="InterPro"/>
</dbReference>
<dbReference type="GO" id="GO:0051028">
    <property type="term" value="P:mRNA transport"/>
    <property type="evidence" value="ECO:0007669"/>
    <property type="project" value="UniProtKB-KW"/>
</dbReference>
<dbReference type="GO" id="GO:0015031">
    <property type="term" value="P:protein transport"/>
    <property type="evidence" value="ECO:0007669"/>
    <property type="project" value="UniProtKB-KW"/>
</dbReference>
<dbReference type="Gene3D" id="6.10.140.1350">
    <property type="match status" value="1"/>
</dbReference>
<dbReference type="InterPro" id="IPR024882">
    <property type="entry name" value="NUP58/p45/49"/>
</dbReference>
<dbReference type="PANTHER" id="PTHR13437">
    <property type="entry name" value="NUCLEOPORIN P58/P45 NUCLEOPORIN-LIKE PROTEIN 1"/>
    <property type="match status" value="1"/>
</dbReference>
<dbReference type="PANTHER" id="PTHR13437:SF2">
    <property type="entry name" value="NUCLEOPORIN P58_P45"/>
    <property type="match status" value="1"/>
</dbReference>
<evidence type="ECO:0000256" key="1">
    <source>
        <dbReference type="SAM" id="MobiDB-lite"/>
    </source>
</evidence>
<evidence type="ECO:0000269" key="2">
    <source>
    </source>
</evidence>
<evidence type="ECO:0000269" key="3">
    <source>
    </source>
</evidence>
<evidence type="ECO:0000303" key="4">
    <source>
    </source>
</evidence>
<evidence type="ECO:0000303" key="5">
    <source>
    </source>
</evidence>
<evidence type="ECO:0000305" key="6"/>
<evidence type="ECO:0000305" key="7">
    <source>
    </source>
</evidence>
<evidence type="ECO:0000312" key="8">
    <source>
        <dbReference type="Araport" id="AT4G37130"/>
    </source>
</evidence>
<evidence type="ECO:0000312" key="9">
    <source>
        <dbReference type="EMBL" id="AAM13071.1"/>
    </source>
</evidence>
<evidence type="ECO:0000312" key="10">
    <source>
        <dbReference type="EMBL" id="CAB16782.1"/>
    </source>
</evidence>
<evidence type="ECO:0000312" key="11">
    <source>
        <dbReference type="Proteomes" id="UP000006548"/>
    </source>
</evidence>
<organism evidence="9">
    <name type="scientific">Arabidopsis thaliana</name>
    <name type="common">Mouse-ear cress</name>
    <dbReference type="NCBI Taxonomy" id="3702"/>
    <lineage>
        <taxon>Eukaryota</taxon>
        <taxon>Viridiplantae</taxon>
        <taxon>Streptophyta</taxon>
        <taxon>Embryophyta</taxon>
        <taxon>Tracheophyta</taxon>
        <taxon>Spermatophyta</taxon>
        <taxon>Magnoliopsida</taxon>
        <taxon>eudicotyledons</taxon>
        <taxon>Gunneridae</taxon>
        <taxon>Pentapetalae</taxon>
        <taxon>rosids</taxon>
        <taxon>malvids</taxon>
        <taxon>Brassicales</taxon>
        <taxon>Brassicaceae</taxon>
        <taxon>Camelineae</taxon>
        <taxon>Arabidopsis</taxon>
    </lineage>
</organism>
<keyword id="KW-0509">mRNA transport</keyword>
<keyword id="KW-0906">Nuclear pore complex</keyword>
<keyword id="KW-0539">Nucleus</keyword>
<keyword id="KW-0653">Protein transport</keyword>
<keyword id="KW-1185">Reference proteome</keyword>
<keyword id="KW-0677">Repeat</keyword>
<keyword id="KW-0811">Translocation</keyword>
<keyword id="KW-0813">Transport</keyword>
<feature type="chain" id="PRO_0000431088" description="Nuclear pore complex protein NUP58">
    <location>
        <begin position="1"/>
        <end position="513"/>
    </location>
</feature>
<feature type="repeat" description="1">
    <location>
        <begin position="446"/>
        <end position="447"/>
    </location>
</feature>
<feature type="repeat" description="2">
    <location>
        <begin position="458"/>
        <end position="459"/>
    </location>
</feature>
<feature type="repeat" description="3">
    <location>
        <begin position="466"/>
        <end position="467"/>
    </location>
</feature>
<feature type="repeat" description="4">
    <location>
        <begin position="473"/>
        <end position="474"/>
    </location>
</feature>
<feature type="repeat" description="5">
    <location>
        <begin position="486"/>
        <end position="487"/>
    </location>
</feature>
<feature type="repeat" description="6">
    <location>
        <begin position="497"/>
        <end position="498"/>
    </location>
</feature>
<feature type="region of interest" description="Disordered" evidence="1">
    <location>
        <begin position="28"/>
        <end position="62"/>
    </location>
</feature>
<feature type="region of interest" description="Disordered" evidence="1">
    <location>
        <begin position="217"/>
        <end position="239"/>
    </location>
</feature>
<feature type="region of interest" description="Disordered" evidence="1">
    <location>
        <begin position="356"/>
        <end position="513"/>
    </location>
</feature>
<feature type="region of interest" description="6 X 2 AA repeats of F-G">
    <location>
        <begin position="446"/>
        <end position="498"/>
    </location>
</feature>
<feature type="compositionally biased region" description="Polar residues" evidence="1">
    <location>
        <begin position="30"/>
        <end position="50"/>
    </location>
</feature>
<feature type="compositionally biased region" description="Low complexity" evidence="1">
    <location>
        <begin position="51"/>
        <end position="62"/>
    </location>
</feature>
<feature type="compositionally biased region" description="Low complexity" evidence="1">
    <location>
        <begin position="217"/>
        <end position="227"/>
    </location>
</feature>
<feature type="compositionally biased region" description="Basic and acidic residues" evidence="1">
    <location>
        <begin position="356"/>
        <end position="365"/>
    </location>
</feature>
<feature type="compositionally biased region" description="Low complexity" evidence="1">
    <location>
        <begin position="377"/>
        <end position="386"/>
    </location>
</feature>
<feature type="compositionally biased region" description="Polar residues" evidence="1">
    <location>
        <begin position="393"/>
        <end position="427"/>
    </location>
</feature>
<feature type="compositionally biased region" description="Low complexity" evidence="1">
    <location>
        <begin position="428"/>
        <end position="446"/>
    </location>
</feature>
<feature type="compositionally biased region" description="Polar residues" evidence="1">
    <location>
        <begin position="452"/>
        <end position="484"/>
    </location>
</feature>
<feature type="compositionally biased region" description="Basic residues" evidence="1">
    <location>
        <begin position="504"/>
        <end position="513"/>
    </location>
</feature>
<proteinExistence type="evidence at protein level"/>
<comment type="function">
    <text evidence="3">Involved in nucleocytoplasmic trafficking. May have regulatory roles in the gibberellin pathway, in auxin signaling and in light perception.</text>
</comment>
<comment type="subunit">
    <text evidence="3 7">Part of the nuclear pore complex (NPC). The NPC has an eight-fold symmetrical structure comprising a central transport channel and two rings, the cytoplasmic and nuclear rings, to which eight filaments are attached. The cytoplasmic filaments have loose ends, while the nuclear filaments are joined in a distal ring, forming a nuclear basket. NPCs are highly dynamic in configuration and composition, and can be devided in 3 subcomplexes, the NUP62 subcomplex, the NUP107-160 subcomplex and the NUP93 subcomplex, containing approximately 30 different nucleoporin proteins. Interacts with GAI, NUP62, SKP1A and SKP1B.</text>
</comment>
<comment type="subcellular location">
    <subcellularLocation>
        <location evidence="2 3">Nucleus envelope</location>
    </subcellularLocation>
    <subcellularLocation>
        <location evidence="7">Nucleus</location>
        <location evidence="7">Nuclear pore complex</location>
    </subcellularLocation>
</comment>
<comment type="tissue specificity">
    <text evidence="3">Ubiquitous. Higherst expression in cauline leaves, lowest in roots.</text>
</comment>
<comment type="developmental stage">
    <text evidence="3">Detected at all developmental stages.</text>
</comment>
<comment type="domain">
    <text evidence="6">Contains FG repeats. FG repeats are interaction sites for karyopherins (importins, exportins) and form probably an affinity gradient, guiding the transport proteins unidirectionally with their cargo through the NPC. FG repeat regions are highly flexible and lack ordered secondary structure. The overall conservation of FG repeats regarding exact sequence, spacing, and repeat unit length is limited.</text>
</comment>
<comment type="disruption phenotype">
    <text evidence="3">Pleiotropic phenotype, including early flowering, increased petiole length and leaf lamina folding toward the abaxial surface in an asymmetrical manner relative to the primary vein. Hypersensitivity to 2,4-dichlorophenoxyacetic acid and paclobutrazol.</text>
</comment>
<comment type="similarity">
    <text evidence="6">Belongs to the NUP58 family.</text>
</comment>
<comment type="sequence caution" evidence="6">
    <conflict type="erroneous gene model prediction">
        <sequence resource="EMBL-CDS" id="CAB16782"/>
    </conflict>
</comment>
<comment type="sequence caution" evidence="6">
    <conflict type="erroneous gene model prediction">
        <sequence resource="EMBL-CDS" id="CAB80379"/>
    </conflict>
</comment>
<sequence length="513" mass="56542">MSFFPPQQQQTPQPLFQTQQTSLFQPQQTNSIFSQSQPQQTNSIFSQSQPQQTNSIFSQPQQQQQTSLFQPQQFQQQQQQLNQQQQQQVQQQLYLFTNDKAPANYSTKWADLHPDSQKLLLQIEEKILEHRSESQRLDQCSRLYDSSVSSEGFEFDASRIVQELGGINTAMDRQKAVLHELMIVAKDMLRNAEIAVRSFMMLQPRFPHWKQGGGVVSVGSQPSQGQGTNPAPASSGQQQAVTTTVQVSDFYRGIPKKPTAFLLQTVVRFEKYLNECRQWVEELEQLLALDSDKYSRHASLLESLPKVMSNVHDFFVHVAAKVESIHQYIESMRTSYLADQRRRGECHDPFLEADRRETAKQEAAAKRVHPTLHLPASTTSTQPSTQVAGLIASSATPGGSNPPQTSVPTSNPSSGAGFSFLNTPASGPSSSLFATPSSTAPTSSLFGPSPTPTQTPLFGSSPASTFGSTQSLFGQTTPSLTMPSQFGGATPGSGASFGSMTKSSRPKSRTTRR</sequence>
<name>NUP58_ARATH</name>
<protein>
    <recommendedName>
        <fullName evidence="4">Nuclear pore complex protein NUP58</fullName>
    </recommendedName>
    <alternativeName>
        <fullName>Nucleoporin 58</fullName>
    </alternativeName>
    <alternativeName>
        <fullName evidence="5">Protein TRANSCURVATA1</fullName>
    </alternativeName>
</protein>
<gene>
    <name evidence="4" type="primary">NUP58</name>
    <name evidence="5" type="synonym">TCU1</name>
    <name evidence="8" type="ordered locus">At4g37130</name>
    <name evidence="10" type="ORF">C7A10.230</name>
</gene>
<accession>Q8RWH9</accession>
<accession>O23173</accession>
<reference key="1">
    <citation type="journal article" date="1998" name="Nature">
        <title>Analysis of 1.9 Mb of contiguous sequence from chromosome 4 of Arabidopsis thaliana.</title>
        <authorList>
            <person name="Bevan M."/>
            <person name="Bancroft I."/>
            <person name="Bent E."/>
            <person name="Love K."/>
            <person name="Goodman H.M."/>
            <person name="Dean C."/>
            <person name="Bergkamp R."/>
            <person name="Dirkse W."/>
            <person name="van Staveren M."/>
            <person name="Stiekema W."/>
            <person name="Drost L."/>
            <person name="Ridley P."/>
            <person name="Hudson S.-A."/>
            <person name="Patel K."/>
            <person name="Murphy G."/>
            <person name="Piffanelli P."/>
            <person name="Wedler H."/>
            <person name="Wedler E."/>
            <person name="Wambutt R."/>
            <person name="Weitzenegger T."/>
            <person name="Pohl T."/>
            <person name="Terryn N."/>
            <person name="Gielen J."/>
            <person name="Villarroel R."/>
            <person name="De Clercq R."/>
            <person name="van Montagu M."/>
            <person name="Lecharny A."/>
            <person name="Aubourg S."/>
            <person name="Gy I."/>
            <person name="Kreis M."/>
            <person name="Lao N."/>
            <person name="Kavanagh T."/>
            <person name="Hempel S."/>
            <person name="Kotter P."/>
            <person name="Entian K.-D."/>
            <person name="Rieger M."/>
            <person name="Schaefer M."/>
            <person name="Funk B."/>
            <person name="Mueller-Auer S."/>
            <person name="Silvey M."/>
            <person name="James R."/>
            <person name="Monfort A."/>
            <person name="Pons A."/>
            <person name="Puigdomenech P."/>
            <person name="Douka A."/>
            <person name="Voukelatou E."/>
            <person name="Milioni D."/>
            <person name="Hatzopoulos P."/>
            <person name="Piravandi E."/>
            <person name="Obermaier B."/>
            <person name="Hilbert H."/>
            <person name="Duesterhoeft A."/>
            <person name="Moores T."/>
            <person name="Jones J.D.G."/>
            <person name="Eneva T."/>
            <person name="Palme K."/>
            <person name="Benes V."/>
            <person name="Rechmann S."/>
            <person name="Ansorge W."/>
            <person name="Cooke R."/>
            <person name="Berger C."/>
            <person name="Delseny M."/>
            <person name="Voet M."/>
            <person name="Volckaert G."/>
            <person name="Mewes H.-W."/>
            <person name="Klosterman S."/>
            <person name="Schueller C."/>
            <person name="Chalwatzis N."/>
        </authorList>
    </citation>
    <scope>NUCLEOTIDE SEQUENCE [LARGE SCALE GENOMIC DNA]</scope>
    <source>
        <strain evidence="11">cv. Columbia</strain>
    </source>
</reference>
<reference key="2">
    <citation type="journal article" date="1999" name="Nature">
        <title>Sequence and analysis of chromosome 4 of the plant Arabidopsis thaliana.</title>
        <authorList>
            <person name="Mayer K.F.X."/>
            <person name="Schueller C."/>
            <person name="Wambutt R."/>
            <person name="Murphy G."/>
            <person name="Volckaert G."/>
            <person name="Pohl T."/>
            <person name="Duesterhoeft A."/>
            <person name="Stiekema W."/>
            <person name="Entian K.-D."/>
            <person name="Terryn N."/>
            <person name="Harris B."/>
            <person name="Ansorge W."/>
            <person name="Brandt P."/>
            <person name="Grivell L.A."/>
            <person name="Rieger M."/>
            <person name="Weichselgartner M."/>
            <person name="de Simone V."/>
            <person name="Obermaier B."/>
            <person name="Mache R."/>
            <person name="Mueller M."/>
            <person name="Kreis M."/>
            <person name="Delseny M."/>
            <person name="Puigdomenech P."/>
            <person name="Watson M."/>
            <person name="Schmidtheini T."/>
            <person name="Reichert B."/>
            <person name="Portetelle D."/>
            <person name="Perez-Alonso M."/>
            <person name="Boutry M."/>
            <person name="Bancroft I."/>
            <person name="Vos P."/>
            <person name="Hoheisel J."/>
            <person name="Zimmermann W."/>
            <person name="Wedler H."/>
            <person name="Ridley P."/>
            <person name="Langham S.-A."/>
            <person name="McCullagh B."/>
            <person name="Bilham L."/>
            <person name="Robben J."/>
            <person name="van der Schueren J."/>
            <person name="Grymonprez B."/>
            <person name="Chuang Y.-J."/>
            <person name="Vandenbussche F."/>
            <person name="Braeken M."/>
            <person name="Weltjens I."/>
            <person name="Voet M."/>
            <person name="Bastiaens I."/>
            <person name="Aert R."/>
            <person name="Defoor E."/>
            <person name="Weitzenegger T."/>
            <person name="Bothe G."/>
            <person name="Ramsperger U."/>
            <person name="Hilbert H."/>
            <person name="Braun M."/>
            <person name="Holzer E."/>
            <person name="Brandt A."/>
            <person name="Peters S."/>
            <person name="van Staveren M."/>
            <person name="Dirkse W."/>
            <person name="Mooijman P."/>
            <person name="Klein Lankhorst R."/>
            <person name="Rose M."/>
            <person name="Hauf J."/>
            <person name="Koetter P."/>
            <person name="Berneiser S."/>
            <person name="Hempel S."/>
            <person name="Feldpausch M."/>
            <person name="Lamberth S."/>
            <person name="Van den Daele H."/>
            <person name="De Keyser A."/>
            <person name="Buysshaert C."/>
            <person name="Gielen J."/>
            <person name="Villarroel R."/>
            <person name="De Clercq R."/>
            <person name="van Montagu M."/>
            <person name="Rogers J."/>
            <person name="Cronin A."/>
            <person name="Quail M.A."/>
            <person name="Bray-Allen S."/>
            <person name="Clark L."/>
            <person name="Doggett J."/>
            <person name="Hall S."/>
            <person name="Kay M."/>
            <person name="Lennard N."/>
            <person name="McLay K."/>
            <person name="Mayes R."/>
            <person name="Pettett A."/>
            <person name="Rajandream M.A."/>
            <person name="Lyne M."/>
            <person name="Benes V."/>
            <person name="Rechmann S."/>
            <person name="Borkova D."/>
            <person name="Bloecker H."/>
            <person name="Scharfe M."/>
            <person name="Grimm M."/>
            <person name="Loehnert T.-H."/>
            <person name="Dose S."/>
            <person name="de Haan M."/>
            <person name="Maarse A.C."/>
            <person name="Schaefer M."/>
            <person name="Mueller-Auer S."/>
            <person name="Gabel C."/>
            <person name="Fuchs M."/>
            <person name="Fartmann B."/>
            <person name="Granderath K."/>
            <person name="Dauner D."/>
            <person name="Herzl A."/>
            <person name="Neumann S."/>
            <person name="Argiriou A."/>
            <person name="Vitale D."/>
            <person name="Liguori R."/>
            <person name="Piravandi E."/>
            <person name="Massenet O."/>
            <person name="Quigley F."/>
            <person name="Clabauld G."/>
            <person name="Muendlein A."/>
            <person name="Felber R."/>
            <person name="Schnabl S."/>
            <person name="Hiller R."/>
            <person name="Schmidt W."/>
            <person name="Lecharny A."/>
            <person name="Aubourg S."/>
            <person name="Chefdor F."/>
            <person name="Cooke R."/>
            <person name="Berger C."/>
            <person name="Monfort A."/>
            <person name="Casacuberta E."/>
            <person name="Gibbons T."/>
            <person name="Weber N."/>
            <person name="Vandenbol M."/>
            <person name="Bargues M."/>
            <person name="Terol J."/>
            <person name="Torres A."/>
            <person name="Perez-Perez A."/>
            <person name="Purnelle B."/>
            <person name="Bent E."/>
            <person name="Johnson S."/>
            <person name="Tacon D."/>
            <person name="Jesse T."/>
            <person name="Heijnen L."/>
            <person name="Schwarz S."/>
            <person name="Scholler P."/>
            <person name="Heber S."/>
            <person name="Francs P."/>
            <person name="Bielke C."/>
            <person name="Frishman D."/>
            <person name="Haase D."/>
            <person name="Lemcke K."/>
            <person name="Mewes H.-W."/>
            <person name="Stocker S."/>
            <person name="Zaccaria P."/>
            <person name="Bevan M."/>
            <person name="Wilson R.K."/>
            <person name="de la Bastide M."/>
            <person name="Habermann K."/>
            <person name="Parnell L."/>
            <person name="Dedhia N."/>
            <person name="Gnoj L."/>
            <person name="Schutz K."/>
            <person name="Huang E."/>
            <person name="Spiegel L."/>
            <person name="Sekhon M."/>
            <person name="Murray J."/>
            <person name="Sheet P."/>
            <person name="Cordes M."/>
            <person name="Abu-Threideh J."/>
            <person name="Stoneking T."/>
            <person name="Kalicki J."/>
            <person name="Graves T."/>
            <person name="Harmon G."/>
            <person name="Edwards J."/>
            <person name="Latreille P."/>
            <person name="Courtney L."/>
            <person name="Cloud J."/>
            <person name="Abbott A."/>
            <person name="Scott K."/>
            <person name="Johnson D."/>
            <person name="Minx P."/>
            <person name="Bentley D."/>
            <person name="Fulton B."/>
            <person name="Miller N."/>
            <person name="Greco T."/>
            <person name="Kemp K."/>
            <person name="Kramer J."/>
            <person name="Fulton L."/>
            <person name="Mardis E."/>
            <person name="Dante M."/>
            <person name="Pepin K."/>
            <person name="Hillier L.W."/>
            <person name="Nelson J."/>
            <person name="Spieth J."/>
            <person name="Ryan E."/>
            <person name="Andrews S."/>
            <person name="Geisel C."/>
            <person name="Layman D."/>
            <person name="Du H."/>
            <person name="Ali J."/>
            <person name="Berghoff A."/>
            <person name="Jones K."/>
            <person name="Drone K."/>
            <person name="Cotton M."/>
            <person name="Joshu C."/>
            <person name="Antonoiu B."/>
            <person name="Zidanic M."/>
            <person name="Strong C."/>
            <person name="Sun H."/>
            <person name="Lamar B."/>
            <person name="Yordan C."/>
            <person name="Ma P."/>
            <person name="Zhong J."/>
            <person name="Preston R."/>
            <person name="Vil D."/>
            <person name="Shekher M."/>
            <person name="Matero A."/>
            <person name="Shah R."/>
            <person name="Swaby I.K."/>
            <person name="O'Shaughnessy A."/>
            <person name="Rodriguez M."/>
            <person name="Hoffman J."/>
            <person name="Till S."/>
            <person name="Granat S."/>
            <person name="Shohdy N."/>
            <person name="Hasegawa A."/>
            <person name="Hameed A."/>
            <person name="Lodhi M."/>
            <person name="Johnson A."/>
            <person name="Chen E."/>
            <person name="Marra M.A."/>
            <person name="Martienssen R."/>
            <person name="McCombie W.R."/>
        </authorList>
    </citation>
    <scope>NUCLEOTIDE SEQUENCE [LARGE SCALE GENOMIC DNA]</scope>
    <source>
        <strain>cv. Columbia</strain>
    </source>
</reference>
<reference key="3">
    <citation type="journal article" date="2017" name="Plant J.">
        <title>Araport11: a complete reannotation of the Arabidopsis thaliana reference genome.</title>
        <authorList>
            <person name="Cheng C.Y."/>
            <person name="Krishnakumar V."/>
            <person name="Chan A.P."/>
            <person name="Thibaud-Nissen F."/>
            <person name="Schobel S."/>
            <person name="Town C.D."/>
        </authorList>
    </citation>
    <scope>GENOME REANNOTATION</scope>
    <source>
        <strain>cv. Columbia</strain>
    </source>
</reference>
<reference key="4">
    <citation type="journal article" date="2003" name="Science">
        <title>Empirical analysis of transcriptional activity in the Arabidopsis genome.</title>
        <authorList>
            <person name="Yamada K."/>
            <person name="Lim J."/>
            <person name="Dale J.M."/>
            <person name="Chen H."/>
            <person name="Shinn P."/>
            <person name="Palm C.J."/>
            <person name="Southwick A.M."/>
            <person name="Wu H.C."/>
            <person name="Kim C.J."/>
            <person name="Nguyen M."/>
            <person name="Pham P.K."/>
            <person name="Cheuk R.F."/>
            <person name="Karlin-Newmann G."/>
            <person name="Liu S.X."/>
            <person name="Lam B."/>
            <person name="Sakano H."/>
            <person name="Wu T."/>
            <person name="Yu G."/>
            <person name="Miranda M."/>
            <person name="Quach H.L."/>
            <person name="Tripp M."/>
            <person name="Chang C.H."/>
            <person name="Lee J.M."/>
            <person name="Toriumi M.J."/>
            <person name="Chan M.M."/>
            <person name="Tang C.C."/>
            <person name="Onodera C.S."/>
            <person name="Deng J.M."/>
            <person name="Akiyama K."/>
            <person name="Ansari Y."/>
            <person name="Arakawa T."/>
            <person name="Banh J."/>
            <person name="Banno F."/>
            <person name="Bowser L."/>
            <person name="Brooks S.Y."/>
            <person name="Carninci P."/>
            <person name="Chao Q."/>
            <person name="Choy N."/>
            <person name="Enju A."/>
            <person name="Goldsmith A.D."/>
            <person name="Gurjal M."/>
            <person name="Hansen N.F."/>
            <person name="Hayashizaki Y."/>
            <person name="Johnson-Hopson C."/>
            <person name="Hsuan V.W."/>
            <person name="Iida K."/>
            <person name="Karnes M."/>
            <person name="Khan S."/>
            <person name="Koesema E."/>
            <person name="Ishida J."/>
            <person name="Jiang P.X."/>
            <person name="Jones T."/>
            <person name="Kawai J."/>
            <person name="Kamiya A."/>
            <person name="Meyers C."/>
            <person name="Nakajima M."/>
            <person name="Narusaka M."/>
            <person name="Seki M."/>
            <person name="Sakurai T."/>
            <person name="Satou M."/>
            <person name="Tamse R."/>
            <person name="Vaysberg M."/>
            <person name="Wallender E.K."/>
            <person name="Wong C."/>
            <person name="Yamamura Y."/>
            <person name="Yuan S."/>
            <person name="Shinozaki K."/>
            <person name="Davis R.W."/>
            <person name="Theologis A."/>
            <person name="Ecker J.R."/>
        </authorList>
    </citation>
    <scope>NUCLEOTIDE SEQUENCE [LARGE SCALE MRNA]</scope>
    <source>
        <strain>cv. Columbia</strain>
    </source>
</reference>
<reference key="5">
    <citation type="journal article" date="2010" name="Plant Cell">
        <title>Identification and characterization of nuclear pore complex components in Arabidopsis thaliana.</title>
        <authorList>
            <person name="Tamura K."/>
            <person name="Fukao Y."/>
            <person name="Iwamoto M."/>
            <person name="Haraguchi T."/>
            <person name="Hara-Nishimura I."/>
        </authorList>
    </citation>
    <scope>IDENTIFICATION IN THE NUCLEAR PORE COMPLEX BY MASS SPECTROMETRY</scope>
    <scope>SUBCELLULAR LOCATION</scope>
    <scope>NOMENCLATURE</scope>
</reference>
<reference key="6">
    <citation type="journal article" date="2013" name="PLoS ONE">
        <title>Arabidopsis TRANSCURVATA1 encodes NUP58, a component of the nucleopore central channel.</title>
        <authorList>
            <person name="Ferrandez-Ayela A."/>
            <person name="Alonso-Peral M.M."/>
            <person name="Sanchez-Garcia A.B."/>
            <person name="Micol-Ponce R."/>
            <person name="Perez-Perez J.M."/>
            <person name="Micol J.L."/>
            <person name="Ponce M.R."/>
        </authorList>
    </citation>
    <scope>FUNCTION</scope>
    <scope>DISRUPTION PHENOTYPE</scope>
    <scope>SUBCELLULAR LOCATION</scope>
    <scope>TISSUE SPECIFICITY</scope>
    <scope>DEVELOPMENTAL STAGE</scope>
    <scope>INTERACTION WITH GAI; NUP62; SKP1A AND SKP1B</scope>
</reference>